<protein>
    <recommendedName>
        <fullName>Alcohol dehydrogenase-related 31 kDa protein</fullName>
    </recommendedName>
</protein>
<gene>
    <name type="primary">Adhr</name>
    <name type="synonym">Adh-dup</name>
</gene>
<evidence type="ECO:0000250" key="1"/>
<evidence type="ECO:0000255" key="2">
    <source>
        <dbReference type="PROSITE-ProRule" id="PRU10001"/>
    </source>
</evidence>
<evidence type="ECO:0000305" key="3"/>
<dbReference type="EMBL" id="X60112">
    <property type="protein sequence ID" value="CAA42710.1"/>
    <property type="molecule type" value="Genomic_DNA"/>
</dbReference>
<dbReference type="PIR" id="D40731">
    <property type="entry name" value="D40731"/>
</dbReference>
<dbReference type="SMR" id="Q09008"/>
<dbReference type="GO" id="GO:0005737">
    <property type="term" value="C:cytoplasm"/>
    <property type="evidence" value="ECO:0007669"/>
    <property type="project" value="TreeGrafter"/>
</dbReference>
<dbReference type="GO" id="GO:0016491">
    <property type="term" value="F:oxidoreductase activity"/>
    <property type="evidence" value="ECO:0007669"/>
    <property type="project" value="UniProtKB-KW"/>
</dbReference>
<dbReference type="CDD" id="cd05323">
    <property type="entry name" value="ADH_SDR_c_like"/>
    <property type="match status" value="1"/>
</dbReference>
<dbReference type="Gene3D" id="3.40.50.720">
    <property type="entry name" value="NAD(P)-binding Rossmann-like Domain"/>
    <property type="match status" value="1"/>
</dbReference>
<dbReference type="InterPro" id="IPR002427">
    <property type="entry name" value="ADH-rel"/>
</dbReference>
<dbReference type="InterPro" id="IPR036291">
    <property type="entry name" value="NAD(P)-bd_dom_sf"/>
</dbReference>
<dbReference type="InterPro" id="IPR020904">
    <property type="entry name" value="Sc_DH/Rdtase_CS"/>
</dbReference>
<dbReference type="InterPro" id="IPR002347">
    <property type="entry name" value="SDR_fam"/>
</dbReference>
<dbReference type="PANTHER" id="PTHR44229">
    <property type="entry name" value="15-HYDROXYPROSTAGLANDIN DEHYDROGENASE [NAD(+)]"/>
    <property type="match status" value="1"/>
</dbReference>
<dbReference type="PANTHER" id="PTHR44229:SF8">
    <property type="entry name" value="ALCOHOL DEHYDROGENASE-RELATED"/>
    <property type="match status" value="1"/>
</dbReference>
<dbReference type="Pfam" id="PF00106">
    <property type="entry name" value="adh_short"/>
    <property type="match status" value="1"/>
</dbReference>
<dbReference type="PRINTS" id="PR01170">
    <property type="entry name" value="ADHRELATED"/>
</dbReference>
<dbReference type="PRINTS" id="PR01167">
    <property type="entry name" value="INSADHFAMILY"/>
</dbReference>
<dbReference type="PRINTS" id="PR00080">
    <property type="entry name" value="SDRFAMILY"/>
</dbReference>
<dbReference type="SUPFAM" id="SSF51735">
    <property type="entry name" value="NAD(P)-binding Rossmann-fold domains"/>
    <property type="match status" value="1"/>
</dbReference>
<dbReference type="PROSITE" id="PS00061">
    <property type="entry name" value="ADH_SHORT"/>
    <property type="match status" value="1"/>
</dbReference>
<proteinExistence type="inferred from homology"/>
<accession>Q09008</accession>
<sequence>MYDLTGKHVCYVADCGGIALETSKVLMTKNIAKLAILQSVENQPAIARLQSIKHSTQIFFWTFDVTMARQEMKKYFDEVMVQMDYIDVLINGATLCDERNIDATINTNLTGMMNTVATVLPYMDRKMGGAGGLVVNVTSVIGLDPSPVFCAYSASKFGVIGFTRSLADPLYYTQNGVAVMAVCCGPTKVFVDRELNAFLEYGQTFADRLRRAPCQSTAVCGLNIVTAIERSENGQIWIADKGGLELVTLHWYWHMADQFLSYMQSTDDENQEQFVSGQR</sequence>
<keyword id="KW-0560">Oxidoreductase</keyword>
<comment type="similarity">
    <text evidence="3">Belongs to the short-chain dehydrogenases/reductases (SDR) family.</text>
</comment>
<reference key="1">
    <citation type="journal article" date="1993" name="Mol. Phylogenet. Evol.">
        <title>Characterization and evolution of the Adh genomic region in Drosophila guanche and Drosophila madeirensis.</title>
        <authorList>
            <person name="Marfany G."/>
            <person name="Gonzalez-Duarte R."/>
        </authorList>
    </citation>
    <scope>NUCLEOTIDE SEQUENCE [GENOMIC DNA]</scope>
</reference>
<feature type="chain" id="PRO_0000054508" description="Alcohol dehydrogenase-related 31 kDa protein">
    <location>
        <begin position="1"/>
        <end position="279"/>
    </location>
</feature>
<feature type="active site" description="Proton acceptor" evidence="2">
    <location>
        <position position="152"/>
    </location>
</feature>
<feature type="binding site" evidence="1">
    <location>
        <begin position="11"/>
        <end position="34"/>
    </location>
    <ligand>
        <name>NAD(+)</name>
        <dbReference type="ChEBI" id="CHEBI:57540"/>
    </ligand>
</feature>
<feature type="binding site" evidence="1">
    <location>
        <position position="139"/>
    </location>
    <ligand>
        <name>substrate</name>
    </ligand>
</feature>
<organism>
    <name type="scientific">Drosophila madeirensis</name>
    <name type="common">Fruit fly</name>
    <dbReference type="NCBI Taxonomy" id="30013"/>
    <lineage>
        <taxon>Eukaryota</taxon>
        <taxon>Metazoa</taxon>
        <taxon>Ecdysozoa</taxon>
        <taxon>Arthropoda</taxon>
        <taxon>Hexapoda</taxon>
        <taxon>Insecta</taxon>
        <taxon>Pterygota</taxon>
        <taxon>Neoptera</taxon>
        <taxon>Endopterygota</taxon>
        <taxon>Diptera</taxon>
        <taxon>Brachycera</taxon>
        <taxon>Muscomorpha</taxon>
        <taxon>Ephydroidea</taxon>
        <taxon>Drosophilidae</taxon>
        <taxon>Drosophila</taxon>
        <taxon>Sophophora</taxon>
    </lineage>
</organism>
<name>ADHR_DROMD</name>